<dbReference type="EC" id="6.1.1.19" evidence="1"/>
<dbReference type="EMBL" id="CP000854">
    <property type="protein sequence ID" value="ACC42512.1"/>
    <property type="molecule type" value="Genomic_DNA"/>
</dbReference>
<dbReference type="RefSeq" id="WP_012395686.1">
    <property type="nucleotide sequence ID" value="NC_010612.1"/>
</dbReference>
<dbReference type="SMR" id="B2HR81"/>
<dbReference type="STRING" id="216594.MMAR_4105"/>
<dbReference type="KEGG" id="mmi:MMAR_4105"/>
<dbReference type="eggNOG" id="COG0018">
    <property type="taxonomic scope" value="Bacteria"/>
</dbReference>
<dbReference type="HOGENOM" id="CLU_006406_0_1_11"/>
<dbReference type="OrthoDB" id="9803211at2"/>
<dbReference type="Proteomes" id="UP000001190">
    <property type="component" value="Chromosome"/>
</dbReference>
<dbReference type="GO" id="GO:0005737">
    <property type="term" value="C:cytoplasm"/>
    <property type="evidence" value="ECO:0007669"/>
    <property type="project" value="UniProtKB-SubCell"/>
</dbReference>
<dbReference type="GO" id="GO:0004814">
    <property type="term" value="F:arginine-tRNA ligase activity"/>
    <property type="evidence" value="ECO:0007669"/>
    <property type="project" value="UniProtKB-UniRule"/>
</dbReference>
<dbReference type="GO" id="GO:0005524">
    <property type="term" value="F:ATP binding"/>
    <property type="evidence" value="ECO:0007669"/>
    <property type="project" value="UniProtKB-UniRule"/>
</dbReference>
<dbReference type="GO" id="GO:0006420">
    <property type="term" value="P:arginyl-tRNA aminoacylation"/>
    <property type="evidence" value="ECO:0007669"/>
    <property type="project" value="UniProtKB-UniRule"/>
</dbReference>
<dbReference type="CDD" id="cd07956">
    <property type="entry name" value="Anticodon_Ia_Arg"/>
    <property type="match status" value="1"/>
</dbReference>
<dbReference type="CDD" id="cd00671">
    <property type="entry name" value="ArgRS_core"/>
    <property type="match status" value="1"/>
</dbReference>
<dbReference type="FunFam" id="1.10.730.10:FF:000008">
    <property type="entry name" value="Arginine--tRNA ligase"/>
    <property type="match status" value="1"/>
</dbReference>
<dbReference type="FunFam" id="3.30.1360.70:FF:000003">
    <property type="entry name" value="Arginine--tRNA ligase"/>
    <property type="match status" value="1"/>
</dbReference>
<dbReference type="FunFam" id="3.40.50.620:FF:000062">
    <property type="entry name" value="Arginine--tRNA ligase"/>
    <property type="match status" value="1"/>
</dbReference>
<dbReference type="Gene3D" id="3.30.1360.70">
    <property type="entry name" value="Arginyl tRNA synthetase N-terminal domain"/>
    <property type="match status" value="1"/>
</dbReference>
<dbReference type="Gene3D" id="3.40.50.620">
    <property type="entry name" value="HUPs"/>
    <property type="match status" value="1"/>
</dbReference>
<dbReference type="Gene3D" id="1.10.730.10">
    <property type="entry name" value="Isoleucyl-tRNA Synthetase, Domain 1"/>
    <property type="match status" value="1"/>
</dbReference>
<dbReference type="HAMAP" id="MF_00123">
    <property type="entry name" value="Arg_tRNA_synth"/>
    <property type="match status" value="1"/>
</dbReference>
<dbReference type="InterPro" id="IPR001412">
    <property type="entry name" value="aa-tRNA-synth_I_CS"/>
</dbReference>
<dbReference type="InterPro" id="IPR001278">
    <property type="entry name" value="Arg-tRNA-ligase"/>
</dbReference>
<dbReference type="InterPro" id="IPR005148">
    <property type="entry name" value="Arg-tRNA-synth_N"/>
</dbReference>
<dbReference type="InterPro" id="IPR036695">
    <property type="entry name" value="Arg-tRNA-synth_N_sf"/>
</dbReference>
<dbReference type="InterPro" id="IPR035684">
    <property type="entry name" value="ArgRS_core"/>
</dbReference>
<dbReference type="InterPro" id="IPR008909">
    <property type="entry name" value="DALR_anticod-bd"/>
</dbReference>
<dbReference type="InterPro" id="IPR014729">
    <property type="entry name" value="Rossmann-like_a/b/a_fold"/>
</dbReference>
<dbReference type="InterPro" id="IPR009080">
    <property type="entry name" value="tRNAsynth_Ia_anticodon-bd"/>
</dbReference>
<dbReference type="NCBIfam" id="TIGR00456">
    <property type="entry name" value="argS"/>
    <property type="match status" value="1"/>
</dbReference>
<dbReference type="PANTHER" id="PTHR11956:SF5">
    <property type="entry name" value="ARGININE--TRNA LIGASE, CYTOPLASMIC"/>
    <property type="match status" value="1"/>
</dbReference>
<dbReference type="PANTHER" id="PTHR11956">
    <property type="entry name" value="ARGINYL-TRNA SYNTHETASE"/>
    <property type="match status" value="1"/>
</dbReference>
<dbReference type="Pfam" id="PF03485">
    <property type="entry name" value="Arg_tRNA_synt_N"/>
    <property type="match status" value="1"/>
</dbReference>
<dbReference type="Pfam" id="PF05746">
    <property type="entry name" value="DALR_1"/>
    <property type="match status" value="1"/>
</dbReference>
<dbReference type="Pfam" id="PF00750">
    <property type="entry name" value="tRNA-synt_1d"/>
    <property type="match status" value="1"/>
</dbReference>
<dbReference type="PRINTS" id="PR01038">
    <property type="entry name" value="TRNASYNTHARG"/>
</dbReference>
<dbReference type="SMART" id="SM01016">
    <property type="entry name" value="Arg_tRNA_synt_N"/>
    <property type="match status" value="1"/>
</dbReference>
<dbReference type="SMART" id="SM00836">
    <property type="entry name" value="DALR_1"/>
    <property type="match status" value="1"/>
</dbReference>
<dbReference type="SUPFAM" id="SSF47323">
    <property type="entry name" value="Anticodon-binding domain of a subclass of class I aminoacyl-tRNA synthetases"/>
    <property type="match status" value="1"/>
</dbReference>
<dbReference type="SUPFAM" id="SSF55190">
    <property type="entry name" value="Arginyl-tRNA synthetase (ArgRS), N-terminal 'additional' domain"/>
    <property type="match status" value="1"/>
</dbReference>
<dbReference type="SUPFAM" id="SSF52374">
    <property type="entry name" value="Nucleotidylyl transferase"/>
    <property type="match status" value="1"/>
</dbReference>
<dbReference type="PROSITE" id="PS00178">
    <property type="entry name" value="AA_TRNA_LIGASE_I"/>
    <property type="match status" value="1"/>
</dbReference>
<feature type="chain" id="PRO_1000095383" description="Arginine--tRNA ligase">
    <location>
        <begin position="1"/>
        <end position="550"/>
    </location>
</feature>
<feature type="short sequence motif" description="'HIGH' region">
    <location>
        <begin position="130"/>
        <end position="140"/>
    </location>
</feature>
<reference key="1">
    <citation type="journal article" date="2008" name="Genome Res.">
        <title>Insights from the complete genome sequence of Mycobacterium marinum on the evolution of Mycobacterium tuberculosis.</title>
        <authorList>
            <person name="Stinear T.P."/>
            <person name="Seemann T."/>
            <person name="Harrison P.F."/>
            <person name="Jenkin G.A."/>
            <person name="Davies J.K."/>
            <person name="Johnson P.D."/>
            <person name="Abdellah Z."/>
            <person name="Arrowsmith C."/>
            <person name="Chillingworth T."/>
            <person name="Churcher C."/>
            <person name="Clarke K."/>
            <person name="Cronin A."/>
            <person name="Davis P."/>
            <person name="Goodhead I."/>
            <person name="Holroyd N."/>
            <person name="Jagels K."/>
            <person name="Lord A."/>
            <person name="Moule S."/>
            <person name="Mungall K."/>
            <person name="Norbertczak H."/>
            <person name="Quail M.A."/>
            <person name="Rabbinowitsch E."/>
            <person name="Walker D."/>
            <person name="White B."/>
            <person name="Whitehead S."/>
            <person name="Small P.L."/>
            <person name="Brosch R."/>
            <person name="Ramakrishnan L."/>
            <person name="Fischbach M.A."/>
            <person name="Parkhill J."/>
            <person name="Cole S.T."/>
        </authorList>
    </citation>
    <scope>NUCLEOTIDE SEQUENCE [LARGE SCALE GENOMIC DNA]</scope>
    <source>
        <strain>ATCC BAA-535 / M</strain>
    </source>
</reference>
<accession>B2HR81</accession>
<organism>
    <name type="scientific">Mycobacterium marinum (strain ATCC BAA-535 / M)</name>
    <dbReference type="NCBI Taxonomy" id="216594"/>
    <lineage>
        <taxon>Bacteria</taxon>
        <taxon>Bacillati</taxon>
        <taxon>Actinomycetota</taxon>
        <taxon>Actinomycetes</taxon>
        <taxon>Mycobacteriales</taxon>
        <taxon>Mycobacteriaceae</taxon>
        <taxon>Mycobacterium</taxon>
        <taxon>Mycobacterium ulcerans group</taxon>
    </lineage>
</organism>
<protein>
    <recommendedName>
        <fullName evidence="1">Arginine--tRNA ligase</fullName>
        <ecNumber evidence="1">6.1.1.19</ecNumber>
    </recommendedName>
    <alternativeName>
        <fullName evidence="1">Arginyl-tRNA synthetase</fullName>
        <shortName evidence="1">ArgRS</shortName>
    </alternativeName>
</protein>
<keyword id="KW-0030">Aminoacyl-tRNA synthetase</keyword>
<keyword id="KW-0067">ATP-binding</keyword>
<keyword id="KW-0963">Cytoplasm</keyword>
<keyword id="KW-0436">Ligase</keyword>
<keyword id="KW-0547">Nucleotide-binding</keyword>
<keyword id="KW-0648">Protein biosynthesis</keyword>
<keyword id="KW-1185">Reference proteome</keyword>
<sequence>MTPADLAELLKSTATAVLSEHALDTSALPQTVVVERPRNPEHGDYASNVALQLAKKVGANPRELAGWIAEALTKADGIASAEVAGPGFINLRLETSAQAKIVNAIIDAGSGFGHSELMAAHKVNLEFVSANPTGPIHIGGTRWAAVGDALGRLLSTQGADVVREYYFNDHGAQIDRFANSLIAAAKGEPTPDDGYAGTYINDIAARVLQKAPDALSLPDAQMHETFREIGVDLMFSHIKESLHEFGTDFDVYTHEDSMHSTGRVDQAVARLRETGNIYEKDGATWLRSSSFGDDKDRVVIKSDGKPAYIAGDLAYYLDKRERGFDLCIYMLGADHHGYIARLKAAAAAFGEDPATVEVLIGQMVNLVRDGQPVRMSKRAGTVITLDDLVEAIGVDAARYSLIRSSVDTPIDIDLALWSSASNENPVYYVQYAHARLSALARNAAELGLIPDTDHLELLSHEKEGVLLRTLGDFPRMLKTAASLREPHRVCRYLEDLAGDYHRFYDSCRVLPQGDEEPTQLHTARLALCQATRQVIANGLGILGVTAPERM</sequence>
<gene>
    <name evidence="1" type="primary">argS</name>
    <name type="ordered locus">MMAR_4105</name>
</gene>
<name>SYR_MYCMM</name>
<comment type="catalytic activity">
    <reaction evidence="1">
        <text>tRNA(Arg) + L-arginine + ATP = L-arginyl-tRNA(Arg) + AMP + diphosphate</text>
        <dbReference type="Rhea" id="RHEA:20301"/>
        <dbReference type="Rhea" id="RHEA-COMP:9658"/>
        <dbReference type="Rhea" id="RHEA-COMP:9673"/>
        <dbReference type="ChEBI" id="CHEBI:30616"/>
        <dbReference type="ChEBI" id="CHEBI:32682"/>
        <dbReference type="ChEBI" id="CHEBI:33019"/>
        <dbReference type="ChEBI" id="CHEBI:78442"/>
        <dbReference type="ChEBI" id="CHEBI:78513"/>
        <dbReference type="ChEBI" id="CHEBI:456215"/>
        <dbReference type="EC" id="6.1.1.19"/>
    </reaction>
</comment>
<comment type="subunit">
    <text evidence="1">Monomer.</text>
</comment>
<comment type="subcellular location">
    <subcellularLocation>
        <location evidence="1">Cytoplasm</location>
    </subcellularLocation>
</comment>
<comment type="similarity">
    <text evidence="1">Belongs to the class-I aminoacyl-tRNA synthetase family.</text>
</comment>
<evidence type="ECO:0000255" key="1">
    <source>
        <dbReference type="HAMAP-Rule" id="MF_00123"/>
    </source>
</evidence>
<proteinExistence type="inferred from homology"/>